<keyword id="KW-0227">DNA damage</keyword>
<keyword id="KW-0234">DNA repair</keyword>
<keyword id="KW-0238">DNA-binding</keyword>
<keyword id="KW-0326">Glycosidase</keyword>
<keyword id="KW-0378">Hydrolase</keyword>
<keyword id="KW-0456">Lyase</keyword>
<keyword id="KW-0479">Metal-binding</keyword>
<keyword id="KW-0511">Multifunctional enzyme</keyword>
<keyword id="KW-1185">Reference proteome</keyword>
<keyword id="KW-0862">Zinc</keyword>
<keyword id="KW-0863">Zinc-finger</keyword>
<evidence type="ECO:0000250" key="1"/>
<evidence type="ECO:0000255" key="2">
    <source>
        <dbReference type="HAMAP-Rule" id="MF_00103"/>
    </source>
</evidence>
<sequence length="273" mass="31115">MPELPEVETVRRGLEKLLLGRTILSLEVKVPKMIKTSYDSFLHDLPGQTIQAMRRRGKYLIFDFGQLIIISHLRMEGKYLLFTDQVPDNKHFHLFFKLDDGSTLVYQDVRKFGTFDLLDRKQEEAYFTRKKLGPEPTKKTFKYVPFERALMHSGKSIKPLLLEQKLVAGLGNIYVDEVLWAAKVHPETPANKLSKAAMKRVHDQTIAILQLGIAKGGSTIRTYRNALGEDGTMQNYLQVYGKTGQPCPRCASMIVKIKLGGRGTHLCPHCQKR</sequence>
<gene>
    <name evidence="2" type="primary">mutM</name>
    <name evidence="2" type="synonym">fpg</name>
    <name type="ordered locus">stu0620</name>
</gene>
<dbReference type="EC" id="3.2.2.23" evidence="2"/>
<dbReference type="EC" id="4.2.99.18" evidence="2"/>
<dbReference type="EMBL" id="CP000023">
    <property type="protein sequence ID" value="AAV60326.1"/>
    <property type="molecule type" value="Genomic_DNA"/>
</dbReference>
<dbReference type="RefSeq" id="WP_011225698.1">
    <property type="nucleotide sequence ID" value="NC_006448.1"/>
</dbReference>
<dbReference type="SMR" id="Q5M576"/>
<dbReference type="STRING" id="264199.stu0620"/>
<dbReference type="GeneID" id="66898527"/>
<dbReference type="KEGG" id="stl:stu0620"/>
<dbReference type="eggNOG" id="COG0266">
    <property type="taxonomic scope" value="Bacteria"/>
</dbReference>
<dbReference type="HOGENOM" id="CLU_038423_1_2_9"/>
<dbReference type="Proteomes" id="UP000001170">
    <property type="component" value="Chromosome"/>
</dbReference>
<dbReference type="GO" id="GO:0034039">
    <property type="term" value="F:8-oxo-7,8-dihydroguanine DNA N-glycosylase activity"/>
    <property type="evidence" value="ECO:0007669"/>
    <property type="project" value="TreeGrafter"/>
</dbReference>
<dbReference type="GO" id="GO:0140078">
    <property type="term" value="F:class I DNA-(apurinic or apyrimidinic site) endonuclease activity"/>
    <property type="evidence" value="ECO:0007669"/>
    <property type="project" value="UniProtKB-EC"/>
</dbReference>
<dbReference type="GO" id="GO:0003684">
    <property type="term" value="F:damaged DNA binding"/>
    <property type="evidence" value="ECO:0007669"/>
    <property type="project" value="InterPro"/>
</dbReference>
<dbReference type="GO" id="GO:0008270">
    <property type="term" value="F:zinc ion binding"/>
    <property type="evidence" value="ECO:0007669"/>
    <property type="project" value="UniProtKB-UniRule"/>
</dbReference>
<dbReference type="GO" id="GO:0006284">
    <property type="term" value="P:base-excision repair"/>
    <property type="evidence" value="ECO:0007669"/>
    <property type="project" value="InterPro"/>
</dbReference>
<dbReference type="CDD" id="cd08966">
    <property type="entry name" value="EcFpg-like_N"/>
    <property type="match status" value="1"/>
</dbReference>
<dbReference type="FunFam" id="1.10.8.50:FF:000003">
    <property type="entry name" value="Formamidopyrimidine-DNA glycosylase"/>
    <property type="match status" value="1"/>
</dbReference>
<dbReference type="FunFam" id="3.20.190.10:FF:000001">
    <property type="entry name" value="Formamidopyrimidine-DNA glycosylase"/>
    <property type="match status" value="1"/>
</dbReference>
<dbReference type="Gene3D" id="1.10.8.50">
    <property type="match status" value="1"/>
</dbReference>
<dbReference type="Gene3D" id="3.20.190.10">
    <property type="entry name" value="MutM-like, N-terminal"/>
    <property type="match status" value="1"/>
</dbReference>
<dbReference type="HAMAP" id="MF_00103">
    <property type="entry name" value="Fapy_DNA_glycosyl"/>
    <property type="match status" value="1"/>
</dbReference>
<dbReference type="InterPro" id="IPR015886">
    <property type="entry name" value="DNA_glyclase/AP_lyase_DNA-bd"/>
</dbReference>
<dbReference type="InterPro" id="IPR015887">
    <property type="entry name" value="DNA_glyclase_Znf_dom_DNA_BS"/>
</dbReference>
<dbReference type="InterPro" id="IPR020629">
    <property type="entry name" value="Formamido-pyr_DNA_Glyclase"/>
</dbReference>
<dbReference type="InterPro" id="IPR012319">
    <property type="entry name" value="FPG_cat"/>
</dbReference>
<dbReference type="InterPro" id="IPR035937">
    <property type="entry name" value="MutM-like_N-ter"/>
</dbReference>
<dbReference type="InterPro" id="IPR010979">
    <property type="entry name" value="Ribosomal_uS13-like_H2TH"/>
</dbReference>
<dbReference type="InterPro" id="IPR000214">
    <property type="entry name" value="Znf_DNA_glyclase/AP_lyase"/>
</dbReference>
<dbReference type="InterPro" id="IPR010663">
    <property type="entry name" value="Znf_FPG/IleRS"/>
</dbReference>
<dbReference type="NCBIfam" id="TIGR00577">
    <property type="entry name" value="fpg"/>
    <property type="match status" value="1"/>
</dbReference>
<dbReference type="NCBIfam" id="NF002211">
    <property type="entry name" value="PRK01103.1"/>
    <property type="match status" value="1"/>
</dbReference>
<dbReference type="PANTHER" id="PTHR22993">
    <property type="entry name" value="FORMAMIDOPYRIMIDINE-DNA GLYCOSYLASE"/>
    <property type="match status" value="1"/>
</dbReference>
<dbReference type="PANTHER" id="PTHR22993:SF9">
    <property type="entry name" value="FORMAMIDOPYRIMIDINE-DNA GLYCOSYLASE"/>
    <property type="match status" value="1"/>
</dbReference>
<dbReference type="Pfam" id="PF01149">
    <property type="entry name" value="Fapy_DNA_glyco"/>
    <property type="match status" value="1"/>
</dbReference>
<dbReference type="Pfam" id="PF06831">
    <property type="entry name" value="H2TH"/>
    <property type="match status" value="1"/>
</dbReference>
<dbReference type="Pfam" id="PF06827">
    <property type="entry name" value="zf-FPG_IleRS"/>
    <property type="match status" value="1"/>
</dbReference>
<dbReference type="SMART" id="SM00898">
    <property type="entry name" value="Fapy_DNA_glyco"/>
    <property type="match status" value="1"/>
</dbReference>
<dbReference type="SMART" id="SM01232">
    <property type="entry name" value="H2TH"/>
    <property type="match status" value="1"/>
</dbReference>
<dbReference type="SUPFAM" id="SSF57716">
    <property type="entry name" value="Glucocorticoid receptor-like (DNA-binding domain)"/>
    <property type="match status" value="1"/>
</dbReference>
<dbReference type="SUPFAM" id="SSF81624">
    <property type="entry name" value="N-terminal domain of MutM-like DNA repair proteins"/>
    <property type="match status" value="1"/>
</dbReference>
<dbReference type="SUPFAM" id="SSF46946">
    <property type="entry name" value="S13-like H2TH domain"/>
    <property type="match status" value="1"/>
</dbReference>
<dbReference type="PROSITE" id="PS51068">
    <property type="entry name" value="FPG_CAT"/>
    <property type="match status" value="1"/>
</dbReference>
<dbReference type="PROSITE" id="PS01242">
    <property type="entry name" value="ZF_FPG_1"/>
    <property type="match status" value="1"/>
</dbReference>
<dbReference type="PROSITE" id="PS51066">
    <property type="entry name" value="ZF_FPG_2"/>
    <property type="match status" value="1"/>
</dbReference>
<proteinExistence type="inferred from homology"/>
<reference key="1">
    <citation type="journal article" date="2004" name="Nat. Biotechnol.">
        <title>Complete sequence and comparative genome analysis of the dairy bacterium Streptococcus thermophilus.</title>
        <authorList>
            <person name="Bolotin A."/>
            <person name="Quinquis B."/>
            <person name="Renault P."/>
            <person name="Sorokin A."/>
            <person name="Ehrlich S.D."/>
            <person name="Kulakauskas S."/>
            <person name="Lapidus A."/>
            <person name="Goltsman E."/>
            <person name="Mazur M."/>
            <person name="Pusch G.D."/>
            <person name="Fonstein M."/>
            <person name="Overbeek R."/>
            <person name="Kyprides N."/>
            <person name="Purnelle B."/>
            <person name="Prozzi D."/>
            <person name="Ngui K."/>
            <person name="Masuy D."/>
            <person name="Hancy F."/>
            <person name="Burteau S."/>
            <person name="Boutry M."/>
            <person name="Delcour J."/>
            <person name="Goffeau A."/>
            <person name="Hols P."/>
        </authorList>
    </citation>
    <scope>NUCLEOTIDE SEQUENCE [LARGE SCALE GENOMIC DNA]</scope>
    <source>
        <strain>ATCC BAA-250 / LMG 18311</strain>
    </source>
</reference>
<protein>
    <recommendedName>
        <fullName evidence="2">Formamidopyrimidine-DNA glycosylase</fullName>
        <shortName evidence="2">Fapy-DNA glycosylase</shortName>
        <ecNumber evidence="2">3.2.2.23</ecNumber>
    </recommendedName>
    <alternativeName>
        <fullName evidence="2">DNA-(apurinic or apyrimidinic site) lyase MutM</fullName>
        <shortName evidence="2">AP lyase MutM</shortName>
        <ecNumber evidence="2">4.2.99.18</ecNumber>
    </alternativeName>
</protein>
<comment type="function">
    <text evidence="2">Involved in base excision repair of DNA damaged by oxidation or by mutagenic agents. Acts as a DNA glycosylase that recognizes and removes damaged bases. Has a preference for oxidized purines, such as 7,8-dihydro-8-oxoguanine (8-oxoG). Has AP (apurinic/apyrimidinic) lyase activity and introduces nicks in the DNA strand. Cleaves the DNA backbone by beta-delta elimination to generate a single-strand break at the site of the removed base with both 3'- and 5'-phosphates.</text>
</comment>
<comment type="catalytic activity">
    <reaction evidence="2">
        <text>Hydrolysis of DNA containing ring-opened 7-methylguanine residues, releasing 2,6-diamino-4-hydroxy-5-(N-methyl)formamidopyrimidine.</text>
        <dbReference type="EC" id="3.2.2.23"/>
    </reaction>
</comment>
<comment type="catalytic activity">
    <reaction evidence="2">
        <text>2'-deoxyribonucleotide-(2'-deoxyribose 5'-phosphate)-2'-deoxyribonucleotide-DNA = a 3'-end 2'-deoxyribonucleotide-(2,3-dehydro-2,3-deoxyribose 5'-phosphate)-DNA + a 5'-end 5'-phospho-2'-deoxyribonucleoside-DNA + H(+)</text>
        <dbReference type="Rhea" id="RHEA:66592"/>
        <dbReference type="Rhea" id="RHEA-COMP:13180"/>
        <dbReference type="Rhea" id="RHEA-COMP:16897"/>
        <dbReference type="Rhea" id="RHEA-COMP:17067"/>
        <dbReference type="ChEBI" id="CHEBI:15378"/>
        <dbReference type="ChEBI" id="CHEBI:136412"/>
        <dbReference type="ChEBI" id="CHEBI:157695"/>
        <dbReference type="ChEBI" id="CHEBI:167181"/>
        <dbReference type="EC" id="4.2.99.18"/>
    </reaction>
</comment>
<comment type="cofactor">
    <cofactor evidence="2">
        <name>Zn(2+)</name>
        <dbReference type="ChEBI" id="CHEBI:29105"/>
    </cofactor>
    <text evidence="2">Binds 1 zinc ion per subunit.</text>
</comment>
<comment type="subunit">
    <text evidence="2">Monomer.</text>
</comment>
<comment type="similarity">
    <text evidence="2">Belongs to the FPG family.</text>
</comment>
<name>FPG_STRT2</name>
<feature type="initiator methionine" description="Removed" evidence="1">
    <location>
        <position position="1"/>
    </location>
</feature>
<feature type="chain" id="PRO_0000228475" description="Formamidopyrimidine-DNA glycosylase">
    <location>
        <begin position="2"/>
        <end position="273"/>
    </location>
</feature>
<feature type="zinc finger region" description="FPG-type" evidence="2">
    <location>
        <begin position="238"/>
        <end position="272"/>
    </location>
</feature>
<feature type="active site" description="Schiff-base intermediate with DNA" evidence="2">
    <location>
        <position position="2"/>
    </location>
</feature>
<feature type="active site" description="Proton donor" evidence="2">
    <location>
        <position position="3"/>
    </location>
</feature>
<feature type="active site" description="Proton donor; for beta-elimination activity" evidence="2">
    <location>
        <position position="58"/>
    </location>
</feature>
<feature type="active site" description="Proton donor; for delta-elimination activity" evidence="2">
    <location>
        <position position="262"/>
    </location>
</feature>
<feature type="binding site" evidence="2">
    <location>
        <position position="91"/>
    </location>
    <ligand>
        <name>DNA</name>
        <dbReference type="ChEBI" id="CHEBI:16991"/>
    </ligand>
</feature>
<feature type="binding site" evidence="2">
    <location>
        <position position="110"/>
    </location>
    <ligand>
        <name>DNA</name>
        <dbReference type="ChEBI" id="CHEBI:16991"/>
    </ligand>
</feature>
<organism>
    <name type="scientific">Streptococcus thermophilus (strain ATCC BAA-250 / LMG 18311)</name>
    <dbReference type="NCBI Taxonomy" id="264199"/>
    <lineage>
        <taxon>Bacteria</taxon>
        <taxon>Bacillati</taxon>
        <taxon>Bacillota</taxon>
        <taxon>Bacilli</taxon>
        <taxon>Lactobacillales</taxon>
        <taxon>Streptococcaceae</taxon>
        <taxon>Streptococcus</taxon>
    </lineage>
</organism>
<accession>Q5M576</accession>